<feature type="chain" id="PRO_0000311280" description="Pre-rRNA-processing protein TSR1 homolog">
    <location>
        <begin position="1"/>
        <end position="814"/>
    </location>
</feature>
<feature type="domain" description="Bms1-type G" evidence="2">
    <location>
        <begin position="84"/>
        <end position="249"/>
    </location>
</feature>
<feature type="region of interest" description="Disordered" evidence="3">
    <location>
        <begin position="1"/>
        <end position="67"/>
    </location>
</feature>
<feature type="region of interest" description="Disordered" evidence="3">
    <location>
        <begin position="316"/>
        <end position="357"/>
    </location>
</feature>
<feature type="region of interest" description="Disordered" evidence="3">
    <location>
        <begin position="392"/>
        <end position="448"/>
    </location>
</feature>
<feature type="compositionally biased region" description="Basic residues" evidence="3">
    <location>
        <begin position="16"/>
        <end position="27"/>
    </location>
</feature>
<feature type="compositionally biased region" description="Basic and acidic residues" evidence="3">
    <location>
        <begin position="317"/>
        <end position="340"/>
    </location>
</feature>
<feature type="compositionally biased region" description="Acidic residues" evidence="3">
    <location>
        <begin position="395"/>
        <end position="426"/>
    </location>
</feature>
<feature type="compositionally biased region" description="Basic and acidic residues" evidence="3">
    <location>
        <begin position="431"/>
        <end position="442"/>
    </location>
</feature>
<feature type="modified residue" description="Phosphothreonine" evidence="4">
    <location>
        <position position="444"/>
    </location>
</feature>
<feature type="sequence conflict" description="In Ref. 3; AAO24947." evidence="5" ref="3">
    <original>E</original>
    <variation>V</variation>
    <location>
        <position position="570"/>
    </location>
</feature>
<protein>
    <recommendedName>
        <fullName>Pre-rRNA-processing protein TSR1 homolog</fullName>
    </recommendedName>
    <alternativeName>
        <fullName evidence="6">Tsr1 ribosome assembly factor</fullName>
    </alternativeName>
</protein>
<reference key="1">
    <citation type="journal article" date="2000" name="Science">
        <title>The genome sequence of Drosophila melanogaster.</title>
        <authorList>
            <person name="Adams M.D."/>
            <person name="Celniker S.E."/>
            <person name="Holt R.A."/>
            <person name="Evans C.A."/>
            <person name="Gocayne J.D."/>
            <person name="Amanatides P.G."/>
            <person name="Scherer S.E."/>
            <person name="Li P.W."/>
            <person name="Hoskins R.A."/>
            <person name="Galle R.F."/>
            <person name="George R.A."/>
            <person name="Lewis S.E."/>
            <person name="Richards S."/>
            <person name="Ashburner M."/>
            <person name="Henderson S.N."/>
            <person name="Sutton G.G."/>
            <person name="Wortman J.R."/>
            <person name="Yandell M.D."/>
            <person name="Zhang Q."/>
            <person name="Chen L.X."/>
            <person name="Brandon R.C."/>
            <person name="Rogers Y.-H.C."/>
            <person name="Blazej R.G."/>
            <person name="Champe M."/>
            <person name="Pfeiffer B.D."/>
            <person name="Wan K.H."/>
            <person name="Doyle C."/>
            <person name="Baxter E.G."/>
            <person name="Helt G."/>
            <person name="Nelson C.R."/>
            <person name="Miklos G.L.G."/>
            <person name="Abril J.F."/>
            <person name="Agbayani A."/>
            <person name="An H.-J."/>
            <person name="Andrews-Pfannkoch C."/>
            <person name="Baldwin D."/>
            <person name="Ballew R.M."/>
            <person name="Basu A."/>
            <person name="Baxendale J."/>
            <person name="Bayraktaroglu L."/>
            <person name="Beasley E.M."/>
            <person name="Beeson K.Y."/>
            <person name="Benos P.V."/>
            <person name="Berman B.P."/>
            <person name="Bhandari D."/>
            <person name="Bolshakov S."/>
            <person name="Borkova D."/>
            <person name="Botchan M.R."/>
            <person name="Bouck J."/>
            <person name="Brokstein P."/>
            <person name="Brottier P."/>
            <person name="Burtis K.C."/>
            <person name="Busam D.A."/>
            <person name="Butler H."/>
            <person name="Cadieu E."/>
            <person name="Center A."/>
            <person name="Chandra I."/>
            <person name="Cherry J.M."/>
            <person name="Cawley S."/>
            <person name="Dahlke C."/>
            <person name="Davenport L.B."/>
            <person name="Davies P."/>
            <person name="de Pablos B."/>
            <person name="Delcher A."/>
            <person name="Deng Z."/>
            <person name="Mays A.D."/>
            <person name="Dew I."/>
            <person name="Dietz S.M."/>
            <person name="Dodson K."/>
            <person name="Doup L.E."/>
            <person name="Downes M."/>
            <person name="Dugan-Rocha S."/>
            <person name="Dunkov B.C."/>
            <person name="Dunn P."/>
            <person name="Durbin K.J."/>
            <person name="Evangelista C.C."/>
            <person name="Ferraz C."/>
            <person name="Ferriera S."/>
            <person name="Fleischmann W."/>
            <person name="Fosler C."/>
            <person name="Gabrielian A.E."/>
            <person name="Garg N.S."/>
            <person name="Gelbart W.M."/>
            <person name="Glasser K."/>
            <person name="Glodek A."/>
            <person name="Gong F."/>
            <person name="Gorrell J.H."/>
            <person name="Gu Z."/>
            <person name="Guan P."/>
            <person name="Harris M."/>
            <person name="Harris N.L."/>
            <person name="Harvey D.A."/>
            <person name="Heiman T.J."/>
            <person name="Hernandez J.R."/>
            <person name="Houck J."/>
            <person name="Hostin D."/>
            <person name="Houston K.A."/>
            <person name="Howland T.J."/>
            <person name="Wei M.-H."/>
            <person name="Ibegwam C."/>
            <person name="Jalali M."/>
            <person name="Kalush F."/>
            <person name="Karpen G.H."/>
            <person name="Ke Z."/>
            <person name="Kennison J.A."/>
            <person name="Ketchum K.A."/>
            <person name="Kimmel B.E."/>
            <person name="Kodira C.D."/>
            <person name="Kraft C.L."/>
            <person name="Kravitz S."/>
            <person name="Kulp D."/>
            <person name="Lai Z."/>
            <person name="Lasko P."/>
            <person name="Lei Y."/>
            <person name="Levitsky A.A."/>
            <person name="Li J.H."/>
            <person name="Li Z."/>
            <person name="Liang Y."/>
            <person name="Lin X."/>
            <person name="Liu X."/>
            <person name="Mattei B."/>
            <person name="McIntosh T.C."/>
            <person name="McLeod M.P."/>
            <person name="McPherson D."/>
            <person name="Merkulov G."/>
            <person name="Milshina N.V."/>
            <person name="Mobarry C."/>
            <person name="Morris J."/>
            <person name="Moshrefi A."/>
            <person name="Mount S.M."/>
            <person name="Moy M."/>
            <person name="Murphy B."/>
            <person name="Murphy L."/>
            <person name="Muzny D.M."/>
            <person name="Nelson D.L."/>
            <person name="Nelson D.R."/>
            <person name="Nelson K.A."/>
            <person name="Nixon K."/>
            <person name="Nusskern D.R."/>
            <person name="Pacleb J.M."/>
            <person name="Palazzolo M."/>
            <person name="Pittman G.S."/>
            <person name="Pan S."/>
            <person name="Pollard J."/>
            <person name="Puri V."/>
            <person name="Reese M.G."/>
            <person name="Reinert K."/>
            <person name="Remington K."/>
            <person name="Saunders R.D.C."/>
            <person name="Scheeler F."/>
            <person name="Shen H."/>
            <person name="Shue B.C."/>
            <person name="Siden-Kiamos I."/>
            <person name="Simpson M."/>
            <person name="Skupski M.P."/>
            <person name="Smith T.J."/>
            <person name="Spier E."/>
            <person name="Spradling A.C."/>
            <person name="Stapleton M."/>
            <person name="Strong R."/>
            <person name="Sun E."/>
            <person name="Svirskas R."/>
            <person name="Tector C."/>
            <person name="Turner R."/>
            <person name="Venter E."/>
            <person name="Wang A.H."/>
            <person name="Wang X."/>
            <person name="Wang Z.-Y."/>
            <person name="Wassarman D.A."/>
            <person name="Weinstock G.M."/>
            <person name="Weissenbach J."/>
            <person name="Williams S.M."/>
            <person name="Woodage T."/>
            <person name="Worley K.C."/>
            <person name="Wu D."/>
            <person name="Yang S."/>
            <person name="Yao Q.A."/>
            <person name="Ye J."/>
            <person name="Yeh R.-F."/>
            <person name="Zaveri J.S."/>
            <person name="Zhan M."/>
            <person name="Zhang G."/>
            <person name="Zhao Q."/>
            <person name="Zheng L."/>
            <person name="Zheng X.H."/>
            <person name="Zhong F.N."/>
            <person name="Zhong W."/>
            <person name="Zhou X."/>
            <person name="Zhu S.C."/>
            <person name="Zhu X."/>
            <person name="Smith H.O."/>
            <person name="Gibbs R.A."/>
            <person name="Myers E.W."/>
            <person name="Rubin G.M."/>
            <person name="Venter J.C."/>
        </authorList>
    </citation>
    <scope>NUCLEOTIDE SEQUENCE [LARGE SCALE GENOMIC DNA]</scope>
    <source>
        <strain>Berkeley</strain>
    </source>
</reference>
<reference key="2">
    <citation type="journal article" date="2002" name="Genome Biol.">
        <title>Annotation of the Drosophila melanogaster euchromatic genome: a systematic review.</title>
        <authorList>
            <person name="Misra S."/>
            <person name="Crosby M.A."/>
            <person name="Mungall C.J."/>
            <person name="Matthews B.B."/>
            <person name="Campbell K.S."/>
            <person name="Hradecky P."/>
            <person name="Huang Y."/>
            <person name="Kaminker J.S."/>
            <person name="Millburn G.H."/>
            <person name="Prochnik S.E."/>
            <person name="Smith C.D."/>
            <person name="Tupy J.L."/>
            <person name="Whitfield E.J."/>
            <person name="Bayraktaroglu L."/>
            <person name="Berman B.P."/>
            <person name="Bettencourt B.R."/>
            <person name="Celniker S.E."/>
            <person name="de Grey A.D.N.J."/>
            <person name="Drysdale R.A."/>
            <person name="Harris N.L."/>
            <person name="Richter J."/>
            <person name="Russo S."/>
            <person name="Schroeder A.J."/>
            <person name="Shu S.Q."/>
            <person name="Stapleton M."/>
            <person name="Yamada C."/>
            <person name="Ashburner M."/>
            <person name="Gelbart W.M."/>
            <person name="Rubin G.M."/>
            <person name="Lewis S.E."/>
        </authorList>
    </citation>
    <scope>GENOME REANNOTATION</scope>
    <source>
        <strain>Berkeley</strain>
    </source>
</reference>
<reference key="3">
    <citation type="submission" date="2008-09" db="EMBL/GenBank/DDBJ databases">
        <authorList>
            <person name="Stapleton M."/>
            <person name="Brokstein P."/>
            <person name="Hong L."/>
            <person name="Agbayani A."/>
            <person name="Booth B."/>
            <person name="Carlson J.W."/>
            <person name="Champe M."/>
            <person name="Chavez C."/>
            <person name="Dorsett V."/>
            <person name="Dresnek D."/>
            <person name="Farfan D."/>
            <person name="Frise E."/>
            <person name="George R.A."/>
            <person name="Gonzalez M."/>
            <person name="Guarin H."/>
            <person name="Kronmiller B."/>
            <person name="Li P.W."/>
            <person name="Liao G."/>
            <person name="Miranda A."/>
            <person name="Mungall C.J."/>
            <person name="Nunoo J."/>
            <person name="Pacleb J.M."/>
            <person name="Paragas V."/>
            <person name="Park S."/>
            <person name="Patel S."/>
            <person name="Phouanenavong S."/>
            <person name="Wan K.H."/>
            <person name="Yu C."/>
            <person name="Lewis S.E."/>
            <person name="Rubin G.M."/>
            <person name="Celniker S.E."/>
        </authorList>
    </citation>
    <scope>NUCLEOTIDE SEQUENCE [LARGE SCALE MRNA]</scope>
    <source>
        <strain>Berkeley</strain>
        <tissue>Embryo</tissue>
    </source>
</reference>
<reference key="4">
    <citation type="journal article" date="2002" name="Genome Biol.">
        <title>A Drosophila full-length cDNA resource.</title>
        <authorList>
            <person name="Stapleton M."/>
            <person name="Carlson J.W."/>
            <person name="Brokstein P."/>
            <person name="Yu C."/>
            <person name="Champe M."/>
            <person name="George R.A."/>
            <person name="Guarin H."/>
            <person name="Kronmiller B."/>
            <person name="Pacleb J.M."/>
            <person name="Park S."/>
            <person name="Wan K.H."/>
            <person name="Rubin G.M."/>
            <person name="Celniker S.E."/>
        </authorList>
    </citation>
    <scope>NUCLEOTIDE SEQUENCE [LARGE SCALE MRNA] OF 189-814</scope>
    <source>
        <strain>Berkeley</strain>
        <tissue>Embryo</tissue>
    </source>
</reference>
<reference key="5">
    <citation type="journal article" date="2008" name="J. Proteome Res.">
        <title>Phosphoproteome analysis of Drosophila melanogaster embryos.</title>
        <authorList>
            <person name="Zhai B."/>
            <person name="Villen J."/>
            <person name="Beausoleil S.A."/>
            <person name="Mintseris J."/>
            <person name="Gygi S.P."/>
        </authorList>
    </citation>
    <scope>PHOSPHORYLATION [LARGE SCALE ANALYSIS] AT THR-444</scope>
    <scope>IDENTIFICATION BY MASS SPECTROMETRY</scope>
    <source>
        <tissue>Embryo</tissue>
    </source>
</reference>
<dbReference type="EMBL" id="AE014296">
    <property type="protein sequence ID" value="AAF51709.1"/>
    <property type="molecule type" value="Genomic_DNA"/>
</dbReference>
<dbReference type="EMBL" id="BT003192">
    <property type="protein sequence ID" value="AAO24947.1"/>
    <property type="molecule type" value="mRNA"/>
</dbReference>
<dbReference type="EMBL" id="BT044092">
    <property type="protein sequence ID" value="ACH92157.1"/>
    <property type="molecule type" value="mRNA"/>
</dbReference>
<dbReference type="EMBL" id="AY058591">
    <property type="protein sequence ID" value="AAL13820.1"/>
    <property type="status" value="ALT_INIT"/>
    <property type="molecule type" value="mRNA"/>
</dbReference>
<dbReference type="RefSeq" id="NP_649304.1">
    <property type="nucleotide sequence ID" value="NM_141047.4"/>
</dbReference>
<dbReference type="SMR" id="Q9VP47"/>
<dbReference type="BioGRID" id="65608">
    <property type="interactions" value="4"/>
</dbReference>
<dbReference type="FunCoup" id="Q9VP47">
    <property type="interactions" value="1665"/>
</dbReference>
<dbReference type="IntAct" id="Q9VP47">
    <property type="interactions" value="2"/>
</dbReference>
<dbReference type="STRING" id="7227.FBpp0077998"/>
<dbReference type="GlyGen" id="Q9VP47">
    <property type="glycosylation" value="1 site"/>
</dbReference>
<dbReference type="iPTMnet" id="Q9VP47"/>
<dbReference type="PaxDb" id="7227-FBpp0077998"/>
<dbReference type="DNASU" id="40360"/>
<dbReference type="EnsemblMetazoa" id="FBtr0078342">
    <property type="protein sequence ID" value="FBpp0077998"/>
    <property type="gene ID" value="FBgn0037073"/>
</dbReference>
<dbReference type="GeneID" id="40360"/>
<dbReference type="KEGG" id="dme:Dmel_CG7338"/>
<dbReference type="UCSC" id="CG7338-RA">
    <property type="organism name" value="d. melanogaster"/>
</dbReference>
<dbReference type="AGR" id="FB:FBgn0037073"/>
<dbReference type="CTD" id="55720"/>
<dbReference type="FlyBase" id="FBgn0037073">
    <property type="gene designation" value="Tsr1"/>
</dbReference>
<dbReference type="VEuPathDB" id="VectorBase:FBgn0037073"/>
<dbReference type="eggNOG" id="KOG1980">
    <property type="taxonomic scope" value="Eukaryota"/>
</dbReference>
<dbReference type="GeneTree" id="ENSGT00940000153195"/>
<dbReference type="HOGENOM" id="CLU_009858_1_0_1"/>
<dbReference type="InParanoid" id="Q9VP47"/>
<dbReference type="OMA" id="MNLPRFK"/>
<dbReference type="OrthoDB" id="119302at2759"/>
<dbReference type="PhylomeDB" id="Q9VP47"/>
<dbReference type="BioGRID-ORCS" id="40360">
    <property type="hits" value="1 hit in 1 CRISPR screen"/>
</dbReference>
<dbReference type="GenomeRNAi" id="40360"/>
<dbReference type="PRO" id="PR:Q9VP47"/>
<dbReference type="Proteomes" id="UP000000803">
    <property type="component" value="Chromosome 3L"/>
</dbReference>
<dbReference type="Bgee" id="FBgn0037073">
    <property type="expression patterns" value="Expressed in egg chamber and 32 other cell types or tissues"/>
</dbReference>
<dbReference type="GO" id="GO:0005730">
    <property type="term" value="C:nucleolus"/>
    <property type="evidence" value="ECO:0000250"/>
    <property type="project" value="UniProtKB"/>
</dbReference>
<dbReference type="GO" id="GO:0005525">
    <property type="term" value="F:GTP binding"/>
    <property type="evidence" value="ECO:0000318"/>
    <property type="project" value="GO_Central"/>
</dbReference>
<dbReference type="GO" id="GO:0003924">
    <property type="term" value="F:GTPase activity"/>
    <property type="evidence" value="ECO:0000318"/>
    <property type="project" value="GO_Central"/>
</dbReference>
<dbReference type="GO" id="GO:0034511">
    <property type="term" value="F:U3 snoRNA binding"/>
    <property type="evidence" value="ECO:0000318"/>
    <property type="project" value="GO_Central"/>
</dbReference>
<dbReference type="GO" id="GO:0000479">
    <property type="term" value="P:endonucleolytic cleavage of tricistronic rRNA transcript (SSU-rRNA, 5.8S rRNA, LSU-rRNA)"/>
    <property type="evidence" value="ECO:0000318"/>
    <property type="project" value="GO_Central"/>
</dbReference>
<dbReference type="GO" id="GO:0000462">
    <property type="term" value="P:maturation of SSU-rRNA from tricistronic rRNA transcript (SSU-rRNA, 5.8S rRNA, LSU-rRNA)"/>
    <property type="evidence" value="ECO:0000318"/>
    <property type="project" value="GO_Central"/>
</dbReference>
<dbReference type="InterPro" id="IPR012948">
    <property type="entry name" value="AARP2CN"/>
</dbReference>
<dbReference type="InterPro" id="IPR039761">
    <property type="entry name" value="Bms1/Tsr1"/>
</dbReference>
<dbReference type="InterPro" id="IPR007034">
    <property type="entry name" value="BMS1_TSR1_C"/>
</dbReference>
<dbReference type="InterPro" id="IPR030387">
    <property type="entry name" value="G_Bms1/Tsr1_dom"/>
</dbReference>
<dbReference type="PANTHER" id="PTHR12858:SF1">
    <property type="entry name" value="PRE-RRNA-PROCESSING PROTEIN TSR1 HOMOLOG"/>
    <property type="match status" value="1"/>
</dbReference>
<dbReference type="PANTHER" id="PTHR12858">
    <property type="entry name" value="RIBOSOME BIOGENESIS PROTEIN"/>
    <property type="match status" value="1"/>
</dbReference>
<dbReference type="Pfam" id="PF08142">
    <property type="entry name" value="AARP2CN"/>
    <property type="match status" value="1"/>
</dbReference>
<dbReference type="Pfam" id="PF04950">
    <property type="entry name" value="RIBIOP_C"/>
    <property type="match status" value="1"/>
</dbReference>
<dbReference type="Pfam" id="PF22298">
    <property type="entry name" value="Tsr1_G-like"/>
    <property type="match status" value="1"/>
</dbReference>
<dbReference type="SMART" id="SM00785">
    <property type="entry name" value="AARP2CN"/>
    <property type="match status" value="1"/>
</dbReference>
<dbReference type="SMART" id="SM01362">
    <property type="entry name" value="DUF663"/>
    <property type="match status" value="1"/>
</dbReference>
<dbReference type="PROSITE" id="PS51714">
    <property type="entry name" value="G_BMS1"/>
    <property type="match status" value="1"/>
</dbReference>
<proteinExistence type="evidence at protein level"/>
<sequence length="814" mass="93717">MADHAFHRPGPLKQANKAHKTGRHRSKGAIDNAQKGKIGLRPISHKHKQQQRKEQRRNQMNQLRKNKREEVLEQKRKLGGQNTAPFLVCLLPMHEQIDPMSALEILKSCDSELVVENSPSGIVYINLPRFKQRFAFVTPPVGRGNELIALDYLKVCDTTLLLTTAAFGDDEIFDRWGQRIFNMMSAQGIPTPVVALMDLESINPKRRPAAKQAAQKVISKLLPEEKIMQLDTASEALNVMRRIGGQKKRILHNVANRPHLFGDVVEFKPGSDPSDDLGTLEVTGFLRGQSLNVNGLVHIPGLGDFQLSQVVAPPDPYKLDKSRDGENSEVRLLDRSDPSKRTSLQSENIPDPMDAEQTWPTEDEIAASQAETKKMKLVKRVPKGYSEYQAAWIPDVEEVEDPDGKDDDDMSEDDDDDKEDDNEDFMSCDNKSFEDEYEKRDSDTEEFQDTVSVASEAAINDEKYDQQMDFQEERETLKKLQQARTDQLWPDEIDTPLDVPARERFQKYRGLESFRTSPWDAKENLPADYARIYQFQNFDRTKRRILNEAKEFEGVLPGLYVTLYVINVPESRWNAFKSAQLMDNIIVYGMLPHEHQMCVMNVVLQRMPDSEVPLKSKEQLIIQCGYRRFVVNPIYSQHTNGDKHKFERYFRPYETVCATFYAPIQFPPAPVLAFKVNPDSTLALVARGRLLSCNPDRIVLKRVVLSGHPMRINRKSASIRYMFFYKEDVEYFKPVKLRTKCGRLGHIKESLGTHGHMKCYFDGQLRSYDTAFMYLYKRVFPKWTYEECLVRTAEHERQHASANRRSSQQVAMEE</sequence>
<keyword id="KW-0539">Nucleus</keyword>
<keyword id="KW-0597">Phosphoprotein</keyword>
<keyword id="KW-1185">Reference proteome</keyword>
<keyword id="KW-0690">Ribosome biogenesis</keyword>
<evidence type="ECO:0000250" key="1"/>
<evidence type="ECO:0000255" key="2">
    <source>
        <dbReference type="PROSITE-ProRule" id="PRU01051"/>
    </source>
</evidence>
<evidence type="ECO:0000256" key="3">
    <source>
        <dbReference type="SAM" id="MobiDB-lite"/>
    </source>
</evidence>
<evidence type="ECO:0000269" key="4">
    <source>
    </source>
</evidence>
<evidence type="ECO:0000305" key="5"/>
<evidence type="ECO:0000312" key="6">
    <source>
        <dbReference type="FlyBase" id="FBgn0037073"/>
    </source>
</evidence>
<name>TSR1_DROME</name>
<accession>Q9VP47</accession>
<accession>B5RIG8</accession>
<accession>Q86PD4</accession>
<accession>Q95TR7</accession>
<organism>
    <name type="scientific">Drosophila melanogaster</name>
    <name type="common">Fruit fly</name>
    <dbReference type="NCBI Taxonomy" id="7227"/>
    <lineage>
        <taxon>Eukaryota</taxon>
        <taxon>Metazoa</taxon>
        <taxon>Ecdysozoa</taxon>
        <taxon>Arthropoda</taxon>
        <taxon>Hexapoda</taxon>
        <taxon>Insecta</taxon>
        <taxon>Pterygota</taxon>
        <taxon>Neoptera</taxon>
        <taxon>Endopterygota</taxon>
        <taxon>Diptera</taxon>
        <taxon>Brachycera</taxon>
        <taxon>Muscomorpha</taxon>
        <taxon>Ephydroidea</taxon>
        <taxon>Drosophilidae</taxon>
        <taxon>Drosophila</taxon>
        <taxon>Sophophora</taxon>
    </lineage>
</organism>
<comment type="function">
    <text evidence="1">Required during maturation of the 40S ribosomal subunit in the nucleolus.</text>
</comment>
<comment type="subcellular location">
    <subcellularLocation>
        <location evidence="1">Nucleus</location>
        <location evidence="1">Nucleolus</location>
    </subcellularLocation>
</comment>
<comment type="similarity">
    <text evidence="5">Belongs to the TRAFAC class translation factor GTPase superfamily. Bms1-like GTPase family. TSR1 subfamily.</text>
</comment>
<comment type="sequence caution" evidence="5">
    <conflict type="erroneous initiation">
        <sequence resource="EMBL-CDS" id="AAL13820"/>
    </conflict>
</comment>
<gene>
    <name evidence="6" type="primary">Tsr1</name>
    <name evidence="6" type="ORF">CG7338</name>
</gene>